<name>PPIB_MYCTU</name>
<protein>
    <recommendedName>
        <fullName>Probable peptidyl-prolyl cis-trans isomerase B</fullName>
        <shortName>PPIase B</shortName>
        <ecNumber>5.2.1.8</ecNumber>
    </recommendedName>
    <alternativeName>
        <fullName>Rotamase B</fullName>
    </alternativeName>
</protein>
<accession>P9WHW1</accession>
<accession>L0TCU5</accession>
<accession>Q50639</accession>
<dbReference type="EC" id="5.2.1.8"/>
<dbReference type="EMBL" id="AL123456">
    <property type="protein sequence ID" value="CCP45378.1"/>
    <property type="molecule type" value="Genomic_DNA"/>
</dbReference>
<dbReference type="PIR" id="E70725">
    <property type="entry name" value="E70725"/>
</dbReference>
<dbReference type="RefSeq" id="NP_217098.1">
    <property type="nucleotide sequence ID" value="NC_000962.3"/>
</dbReference>
<dbReference type="RefSeq" id="WP_003413367.1">
    <property type="nucleotide sequence ID" value="NC_000962.3"/>
</dbReference>
<dbReference type="SMR" id="P9WHW1"/>
<dbReference type="STRING" id="83332.Rv2582"/>
<dbReference type="PaxDb" id="83332-Rv2582"/>
<dbReference type="DNASU" id="887691"/>
<dbReference type="GeneID" id="887691"/>
<dbReference type="KEGG" id="mtu:Rv2582"/>
<dbReference type="KEGG" id="mtv:RVBD_2582"/>
<dbReference type="PATRIC" id="fig|83332.111.peg.2885"/>
<dbReference type="TubercuList" id="Rv2582"/>
<dbReference type="eggNOG" id="COG0652">
    <property type="taxonomic scope" value="Bacteria"/>
</dbReference>
<dbReference type="InParanoid" id="P9WHW1"/>
<dbReference type="OrthoDB" id="5507614at2"/>
<dbReference type="PhylomeDB" id="P9WHW1"/>
<dbReference type="Proteomes" id="UP000001584">
    <property type="component" value="Chromosome"/>
</dbReference>
<dbReference type="GO" id="GO:0005886">
    <property type="term" value="C:plasma membrane"/>
    <property type="evidence" value="ECO:0007005"/>
    <property type="project" value="MTBBASE"/>
</dbReference>
<dbReference type="GO" id="GO:0003755">
    <property type="term" value="F:peptidyl-prolyl cis-trans isomerase activity"/>
    <property type="evidence" value="ECO:0000318"/>
    <property type="project" value="GO_Central"/>
</dbReference>
<dbReference type="GO" id="GO:0006457">
    <property type="term" value="P:protein folding"/>
    <property type="evidence" value="ECO:0000318"/>
    <property type="project" value="GO_Central"/>
</dbReference>
<dbReference type="CDD" id="cd00317">
    <property type="entry name" value="cyclophilin"/>
    <property type="match status" value="1"/>
</dbReference>
<dbReference type="FunFam" id="2.40.100.10:FF:000060">
    <property type="entry name" value="Probable peptidyl-prolyl cis-trans isomerase B"/>
    <property type="match status" value="1"/>
</dbReference>
<dbReference type="Gene3D" id="2.40.100.10">
    <property type="entry name" value="Cyclophilin-like"/>
    <property type="match status" value="1"/>
</dbReference>
<dbReference type="InterPro" id="IPR029000">
    <property type="entry name" value="Cyclophilin-like_dom_sf"/>
</dbReference>
<dbReference type="InterPro" id="IPR002130">
    <property type="entry name" value="Cyclophilin-type_PPIase_dom"/>
</dbReference>
<dbReference type="InterPro" id="IPR044666">
    <property type="entry name" value="Cyclophilin_A-like"/>
</dbReference>
<dbReference type="PANTHER" id="PTHR45625:SF3">
    <property type="entry name" value="PEPTIDYL-PROLYL CIS-TRANS ISOMERASE B-RELATED"/>
    <property type="match status" value="1"/>
</dbReference>
<dbReference type="PANTHER" id="PTHR45625">
    <property type="entry name" value="PEPTIDYL-PROLYL CIS-TRANS ISOMERASE-RELATED"/>
    <property type="match status" value="1"/>
</dbReference>
<dbReference type="Pfam" id="PF00160">
    <property type="entry name" value="Pro_isomerase"/>
    <property type="match status" value="1"/>
</dbReference>
<dbReference type="PRINTS" id="PR00153">
    <property type="entry name" value="CSAPPISMRASE"/>
</dbReference>
<dbReference type="SUPFAM" id="SSF50891">
    <property type="entry name" value="Cyclophilin-like"/>
    <property type="match status" value="1"/>
</dbReference>
<dbReference type="PROSITE" id="PS50072">
    <property type="entry name" value="CSA_PPIASE_2"/>
    <property type="match status" value="1"/>
</dbReference>
<comment type="function">
    <text evidence="1">PPIases accelerate the folding of proteins. It catalyzes the cis-trans isomerization of proline imidic peptide bonds in oligopeptides (By similarity).</text>
</comment>
<comment type="catalytic activity">
    <reaction>
        <text>[protein]-peptidylproline (omega=180) = [protein]-peptidylproline (omega=0)</text>
        <dbReference type="Rhea" id="RHEA:16237"/>
        <dbReference type="Rhea" id="RHEA-COMP:10747"/>
        <dbReference type="Rhea" id="RHEA-COMP:10748"/>
        <dbReference type="ChEBI" id="CHEBI:83833"/>
        <dbReference type="ChEBI" id="CHEBI:83834"/>
        <dbReference type="EC" id="5.2.1.8"/>
    </reaction>
</comment>
<comment type="miscellaneous">
    <text>Was identified as a high-confidence drug target.</text>
</comment>
<comment type="similarity">
    <text evidence="4">Belongs to the cyclophilin-type PPIase family.</text>
</comment>
<keyword id="KW-0413">Isomerase</keyword>
<keyword id="KW-1185">Reference proteome</keyword>
<keyword id="KW-0697">Rotamase</keyword>
<reference key="1">
    <citation type="journal article" date="1998" name="Nature">
        <title>Deciphering the biology of Mycobacterium tuberculosis from the complete genome sequence.</title>
        <authorList>
            <person name="Cole S.T."/>
            <person name="Brosch R."/>
            <person name="Parkhill J."/>
            <person name="Garnier T."/>
            <person name="Churcher C.M."/>
            <person name="Harris D.E."/>
            <person name="Gordon S.V."/>
            <person name="Eiglmeier K."/>
            <person name="Gas S."/>
            <person name="Barry C.E. III"/>
            <person name="Tekaia F."/>
            <person name="Badcock K."/>
            <person name="Basham D."/>
            <person name="Brown D."/>
            <person name="Chillingworth T."/>
            <person name="Connor R."/>
            <person name="Davies R.M."/>
            <person name="Devlin K."/>
            <person name="Feltwell T."/>
            <person name="Gentles S."/>
            <person name="Hamlin N."/>
            <person name="Holroyd S."/>
            <person name="Hornsby T."/>
            <person name="Jagels K."/>
            <person name="Krogh A."/>
            <person name="McLean J."/>
            <person name="Moule S."/>
            <person name="Murphy L.D."/>
            <person name="Oliver S."/>
            <person name="Osborne J."/>
            <person name="Quail M.A."/>
            <person name="Rajandream M.A."/>
            <person name="Rogers J."/>
            <person name="Rutter S."/>
            <person name="Seeger K."/>
            <person name="Skelton S."/>
            <person name="Squares S."/>
            <person name="Squares R."/>
            <person name="Sulston J.E."/>
            <person name="Taylor K."/>
            <person name="Whitehead S."/>
            <person name="Barrell B.G."/>
        </authorList>
    </citation>
    <scope>NUCLEOTIDE SEQUENCE [LARGE SCALE GENOMIC DNA]</scope>
    <source>
        <strain>ATCC 25618 / H37Rv</strain>
    </source>
</reference>
<reference key="2">
    <citation type="journal article" date="2008" name="BMC Syst. Biol.">
        <title>targetTB: a target identification pipeline for Mycobacterium tuberculosis through an interactome, reactome and genome-scale structural analysis.</title>
        <authorList>
            <person name="Raman K."/>
            <person name="Yeturu K."/>
            <person name="Chandra N."/>
        </authorList>
    </citation>
    <scope>IDENTIFICATION AS A DRUG TARGET [LARGE SCALE ANALYSIS]</scope>
</reference>
<reference key="3">
    <citation type="journal article" date="2011" name="Mol. Cell. Proteomics">
        <title>Proteogenomic analysis of Mycobacterium tuberculosis by high resolution mass spectrometry.</title>
        <authorList>
            <person name="Kelkar D.S."/>
            <person name="Kumar D."/>
            <person name="Kumar P."/>
            <person name="Balakrishnan L."/>
            <person name="Muthusamy B."/>
            <person name="Yadav A.K."/>
            <person name="Shrivastava P."/>
            <person name="Marimuthu A."/>
            <person name="Anand S."/>
            <person name="Sundaram H."/>
            <person name="Kingsbury R."/>
            <person name="Harsha H.C."/>
            <person name="Nair B."/>
            <person name="Prasad T.S."/>
            <person name="Chauhan D.S."/>
            <person name="Katoch K."/>
            <person name="Katoch V.M."/>
            <person name="Kumar P."/>
            <person name="Chaerkady R."/>
            <person name="Ramachandran S."/>
            <person name="Dash D."/>
            <person name="Pandey A."/>
        </authorList>
    </citation>
    <scope>IDENTIFICATION BY MASS SPECTROMETRY [LARGE SCALE ANALYSIS]</scope>
    <source>
        <strain>ATCC 25618 / H37Rv</strain>
    </source>
</reference>
<organism>
    <name type="scientific">Mycobacterium tuberculosis (strain ATCC 25618 / H37Rv)</name>
    <dbReference type="NCBI Taxonomy" id="83332"/>
    <lineage>
        <taxon>Bacteria</taxon>
        <taxon>Bacillati</taxon>
        <taxon>Actinomycetota</taxon>
        <taxon>Actinomycetes</taxon>
        <taxon>Mycobacteriales</taxon>
        <taxon>Mycobacteriaceae</taxon>
        <taxon>Mycobacterium</taxon>
        <taxon>Mycobacterium tuberculosis complex</taxon>
    </lineage>
</organism>
<feature type="chain" id="PRO_0000064212" description="Probable peptidyl-prolyl cis-trans isomerase B">
    <location>
        <begin position="1"/>
        <end position="308"/>
    </location>
</feature>
<feature type="domain" description="PPIase cyclophilin-type" evidence="2">
    <location>
        <begin position="139"/>
        <end position="307"/>
    </location>
</feature>
<feature type="region of interest" description="Disordered" evidence="3">
    <location>
        <begin position="74"/>
        <end position="123"/>
    </location>
</feature>
<feature type="compositionally biased region" description="Low complexity" evidence="3">
    <location>
        <begin position="77"/>
        <end position="97"/>
    </location>
</feature>
<proteinExistence type="evidence at protein level"/>
<gene>
    <name type="primary">ppiB</name>
    <name type="synonym">ppi</name>
    <name type="ordered locus">Rv2582</name>
    <name type="ORF">MTCY227.19c</name>
</gene>
<evidence type="ECO:0000250" key="1"/>
<evidence type="ECO:0000255" key="2">
    <source>
        <dbReference type="PROSITE-ProRule" id="PRU00156"/>
    </source>
</evidence>
<evidence type="ECO:0000256" key="3">
    <source>
        <dbReference type="SAM" id="MobiDB-lite"/>
    </source>
</evidence>
<evidence type="ECO:0000305" key="4"/>
<sequence length="308" mass="32371">MGHLTPVAAPRLACAFVPTNAQRRATAKRKLERQLERRAKQAKRRRILTIVGGSLAAVAVIVAVVVTVVVNKDDHQSTTSATPTDSASTSPPQAATAPPLPPFKPSANLGANCQYPPSPDKAVKPVKLPRTGKVPTDPAQVSVSMVTNQGNIGLMLANNESPCTVNSFVSLAQQGFFKGTTCHRLTTSPMLAVLQCGDPKGDGTGGPGYQFANEYPTDQYSANDPKLNEPVIYPRGTLAMANAGPNTNSSQFFMVYRDSKLPPQYTVFGTIQADGLTTLDKIAKAGVAGGGEDGKPATEVTITSVLLD</sequence>